<gene>
    <name evidence="1" type="primary">rpsH</name>
    <name evidence="1" type="synonym">rps8</name>
    <name type="ordered locus">Cyan7425_1305</name>
</gene>
<feature type="chain" id="PRO_1000165324" description="Small ribosomal subunit protein uS8">
    <location>
        <begin position="1"/>
        <end position="133"/>
    </location>
</feature>
<organism>
    <name type="scientific">Cyanothece sp. (strain PCC 7425 / ATCC 29141)</name>
    <dbReference type="NCBI Taxonomy" id="395961"/>
    <lineage>
        <taxon>Bacteria</taxon>
        <taxon>Bacillati</taxon>
        <taxon>Cyanobacteriota</taxon>
        <taxon>Cyanophyceae</taxon>
        <taxon>Gomontiellales</taxon>
        <taxon>Cyanothecaceae</taxon>
        <taxon>Cyanothece</taxon>
    </lineage>
</organism>
<accession>B8HMR7</accession>
<keyword id="KW-0687">Ribonucleoprotein</keyword>
<keyword id="KW-0689">Ribosomal protein</keyword>
<keyword id="KW-0694">RNA-binding</keyword>
<keyword id="KW-0699">rRNA-binding</keyword>
<evidence type="ECO:0000255" key="1">
    <source>
        <dbReference type="HAMAP-Rule" id="MF_01302"/>
    </source>
</evidence>
<evidence type="ECO:0000305" key="2"/>
<proteinExistence type="inferred from homology"/>
<comment type="function">
    <text evidence="1">One of the primary rRNA binding proteins, it binds directly to 16S rRNA central domain where it helps coordinate assembly of the platform of the 30S subunit.</text>
</comment>
<comment type="subunit">
    <text evidence="1">Part of the 30S ribosomal subunit. Contacts proteins S5 and S12.</text>
</comment>
<comment type="similarity">
    <text evidence="1">Belongs to the universal ribosomal protein uS8 family.</text>
</comment>
<dbReference type="EMBL" id="CP001344">
    <property type="protein sequence ID" value="ACL43682.1"/>
    <property type="molecule type" value="Genomic_DNA"/>
</dbReference>
<dbReference type="SMR" id="B8HMR7"/>
<dbReference type="STRING" id="395961.Cyan7425_1305"/>
<dbReference type="KEGG" id="cyn:Cyan7425_1305"/>
<dbReference type="eggNOG" id="COG0096">
    <property type="taxonomic scope" value="Bacteria"/>
</dbReference>
<dbReference type="HOGENOM" id="CLU_098428_0_2_3"/>
<dbReference type="OrthoDB" id="9802617at2"/>
<dbReference type="GO" id="GO:1990904">
    <property type="term" value="C:ribonucleoprotein complex"/>
    <property type="evidence" value="ECO:0007669"/>
    <property type="project" value="UniProtKB-KW"/>
</dbReference>
<dbReference type="GO" id="GO:0005840">
    <property type="term" value="C:ribosome"/>
    <property type="evidence" value="ECO:0007669"/>
    <property type="project" value="UniProtKB-KW"/>
</dbReference>
<dbReference type="GO" id="GO:0019843">
    <property type="term" value="F:rRNA binding"/>
    <property type="evidence" value="ECO:0007669"/>
    <property type="project" value="UniProtKB-UniRule"/>
</dbReference>
<dbReference type="GO" id="GO:0003735">
    <property type="term" value="F:structural constituent of ribosome"/>
    <property type="evidence" value="ECO:0007669"/>
    <property type="project" value="InterPro"/>
</dbReference>
<dbReference type="GO" id="GO:0006412">
    <property type="term" value="P:translation"/>
    <property type="evidence" value="ECO:0007669"/>
    <property type="project" value="UniProtKB-UniRule"/>
</dbReference>
<dbReference type="FunFam" id="3.30.1370.30:FF:000002">
    <property type="entry name" value="30S ribosomal protein S8"/>
    <property type="match status" value="1"/>
</dbReference>
<dbReference type="FunFam" id="3.30.1490.10:FF:000001">
    <property type="entry name" value="30S ribosomal protein S8"/>
    <property type="match status" value="1"/>
</dbReference>
<dbReference type="Gene3D" id="3.30.1370.30">
    <property type="match status" value="1"/>
</dbReference>
<dbReference type="Gene3D" id="3.30.1490.10">
    <property type="match status" value="1"/>
</dbReference>
<dbReference type="HAMAP" id="MF_01302_B">
    <property type="entry name" value="Ribosomal_uS8_B"/>
    <property type="match status" value="1"/>
</dbReference>
<dbReference type="InterPro" id="IPR000630">
    <property type="entry name" value="Ribosomal_uS8"/>
</dbReference>
<dbReference type="InterPro" id="IPR047863">
    <property type="entry name" value="Ribosomal_uS8_CS"/>
</dbReference>
<dbReference type="InterPro" id="IPR035987">
    <property type="entry name" value="Ribosomal_uS8_sf"/>
</dbReference>
<dbReference type="NCBIfam" id="NF001109">
    <property type="entry name" value="PRK00136.1"/>
    <property type="match status" value="1"/>
</dbReference>
<dbReference type="PANTHER" id="PTHR11758">
    <property type="entry name" value="40S RIBOSOMAL PROTEIN S15A"/>
    <property type="match status" value="1"/>
</dbReference>
<dbReference type="Pfam" id="PF00410">
    <property type="entry name" value="Ribosomal_S8"/>
    <property type="match status" value="1"/>
</dbReference>
<dbReference type="SUPFAM" id="SSF56047">
    <property type="entry name" value="Ribosomal protein S8"/>
    <property type="match status" value="1"/>
</dbReference>
<dbReference type="PROSITE" id="PS00053">
    <property type="entry name" value="RIBOSOMAL_S8"/>
    <property type="match status" value="1"/>
</dbReference>
<name>RS8_CYAP4</name>
<protein>
    <recommendedName>
        <fullName evidence="1">Small ribosomal subunit protein uS8</fullName>
    </recommendedName>
    <alternativeName>
        <fullName evidence="2">30S ribosomal protein S8</fullName>
    </alternativeName>
</protein>
<reference key="1">
    <citation type="journal article" date="2011" name="MBio">
        <title>Novel metabolic attributes of the genus Cyanothece, comprising a group of unicellular nitrogen-fixing Cyanobacteria.</title>
        <authorList>
            <person name="Bandyopadhyay A."/>
            <person name="Elvitigala T."/>
            <person name="Welsh E."/>
            <person name="Stockel J."/>
            <person name="Liberton M."/>
            <person name="Min H."/>
            <person name="Sherman L.A."/>
            <person name="Pakrasi H.B."/>
        </authorList>
    </citation>
    <scope>NUCLEOTIDE SEQUENCE [LARGE SCALE GENOMIC DNA]</scope>
    <source>
        <strain>PCC 7425 / ATCC 29141</strain>
    </source>
</reference>
<sequence>MATSDTIGDMLTRIRNANLARHPTTEVPATRMTRSIAQVLKNEGFINDFEEIGDGVKLNLVISLKYRGKQRQPTITALKRISKPGLRVYSNRRELPRVLGGIGIAIISTSSGIMTDRDARRSGVGGEVLCYVW</sequence>